<name>GP162_HUMAN</name>
<proteinExistence type="evidence at protein level"/>
<gene>
    <name type="primary">GPR162</name>
    <name type="synonym">GRCA</name>
</gene>
<comment type="function">
    <text>Orphan receptor.</text>
</comment>
<comment type="interaction">
    <interactant intactId="EBI-22387200">
        <id>Q16538</id>
    </interactant>
    <interactant intactId="EBI-741480">
        <id>Q9UMX0</id>
        <label>UBQLN1</label>
    </interactant>
    <organismsDiffer>false</organismsDiffer>
    <experiments>3</experiments>
</comment>
<comment type="interaction">
    <interactant intactId="EBI-22387200">
        <id>Q16538</id>
    </interactant>
    <interactant intactId="EBI-947187">
        <id>Q9UHD9</id>
        <label>UBQLN2</label>
    </interactant>
    <organismsDiffer>false</organismsDiffer>
    <experiments>3</experiments>
</comment>
<comment type="subcellular location">
    <subcellularLocation>
        <location evidence="1">Cell membrane</location>
        <topology evidence="1">Multi-pass membrane protein</topology>
    </subcellularLocation>
</comment>
<comment type="alternative products">
    <event type="alternative splicing"/>
    <isoform>
        <id>Q16538-1</id>
        <name>1</name>
        <name>A-2</name>
        <sequence type="displayed"/>
    </isoform>
    <isoform>
        <id>Q16538-2</id>
        <name>2</name>
        <name>A-1</name>
        <sequence type="described" ref="VSP_016302 VSP_016303"/>
    </isoform>
</comment>
<comment type="similarity">
    <text evidence="4">Belongs to the G-protein coupled receptor 1 family.</text>
</comment>
<sequence>MARGGAGAEEASLRSNALSWLACGLLALLANAWIILSISAKQQKHKPLELLLCFLAGTHILMAAVPLTTFAVVQLRRQASSDYDWNESICKVFVSTYYTLALATCFTVASLSYHRMWMVRWPVNYRLSNAKKQALHAVMGIWMVSFILSTLPSIGWHNNGERYYARGCQFIVSKIGLGFGVCFSLLLLGGIVMGLVCVAITFYQTLWARPRRARQARRVGGGGGTKAGGPGALGTRPAFEVPAIVVEDARGKRRSSLDGSESAKTSLQVTNLVSAIVFLYDSLTGVPILVVSFFSLKSDSAPPWMVLAVLWCSMAQTLLLPSFIWSCERYRADVRTVWEQCVAIMSEEDGDDDGGCDDYAEGRVCKVRFDANGATGPGSRDPAQVKLLPGRHMLFPPLERVHYLQVPLSRRLSHDETNIFSTPREPGSFLHKWSSSDDIRVLPAQSRALGGPPEYLGQRHRLEDEEDEEEAEGGGLASLRQFLESGVLGSGGGPPRGPGFFREEITTFIDETPLPSPTASPGHSPRRPRPLGLSPRRLSLGSPESRAVGLPLGLSAGRRCSLTGGEESARAWGGSWGPGNPIFPQLTL</sequence>
<dbReference type="EMBL" id="U47924">
    <property type="protein sequence ID" value="AAB51310.1"/>
    <property type="molecule type" value="Genomic_DNA"/>
</dbReference>
<dbReference type="EMBL" id="U47924">
    <property type="protein sequence ID" value="AAB51311.1"/>
    <property type="molecule type" value="Genomic_DNA"/>
</dbReference>
<dbReference type="EMBL" id="U47925">
    <property type="protein sequence ID" value="AAC50463.1"/>
    <property type="molecule type" value="mRNA"/>
</dbReference>
<dbReference type="EMBL" id="U47928">
    <property type="protein sequence ID" value="AAC50466.1"/>
    <property type="molecule type" value="mRNA"/>
</dbReference>
<dbReference type="EMBL" id="BC002353">
    <property type="protein sequence ID" value="AAH02353.1"/>
    <property type="molecule type" value="mRNA"/>
</dbReference>
<dbReference type="EMBL" id="BC080585">
    <property type="protein sequence ID" value="AAH80585.1"/>
    <property type="molecule type" value="mRNA"/>
</dbReference>
<dbReference type="EMBL" id="AB209836">
    <property type="protein sequence ID" value="BAD93073.1"/>
    <property type="molecule type" value="mRNA"/>
</dbReference>
<dbReference type="CCDS" id="CCDS44819.1">
    <molecule id="Q16538-2"/>
</dbReference>
<dbReference type="CCDS" id="CCDS8563.1">
    <molecule id="Q16538-1"/>
</dbReference>
<dbReference type="RefSeq" id="NP_055264.1">
    <molecule id="Q16538-2"/>
    <property type="nucleotide sequence ID" value="NM_014449.2"/>
</dbReference>
<dbReference type="RefSeq" id="NP_062832.1">
    <molecule id="Q16538-1"/>
    <property type="nucleotide sequence ID" value="NM_019858.2"/>
</dbReference>
<dbReference type="SMR" id="Q16538"/>
<dbReference type="BioGRID" id="118087">
    <property type="interactions" value="5"/>
</dbReference>
<dbReference type="FunCoup" id="Q16538">
    <property type="interactions" value="200"/>
</dbReference>
<dbReference type="IntAct" id="Q16538">
    <property type="interactions" value="3"/>
</dbReference>
<dbReference type="MINT" id="Q16538"/>
<dbReference type="STRING" id="9606.ENSP00000311528"/>
<dbReference type="ChEMBL" id="CHEMBL4523871"/>
<dbReference type="GlyCosmos" id="Q16538">
    <property type="glycosylation" value="1 site, No reported glycans"/>
</dbReference>
<dbReference type="GlyGen" id="Q16538">
    <property type="glycosylation" value="2 sites"/>
</dbReference>
<dbReference type="iPTMnet" id="Q16538"/>
<dbReference type="PhosphoSitePlus" id="Q16538"/>
<dbReference type="BioMuta" id="GPR162"/>
<dbReference type="DMDM" id="74754516"/>
<dbReference type="jPOST" id="Q16538"/>
<dbReference type="MassIVE" id="Q16538"/>
<dbReference type="PaxDb" id="9606-ENSP00000311528"/>
<dbReference type="PeptideAtlas" id="Q16538"/>
<dbReference type="ProteomicsDB" id="60899">
    <molecule id="Q16538-1"/>
</dbReference>
<dbReference type="ProteomicsDB" id="60900">
    <molecule id="Q16538-2"/>
</dbReference>
<dbReference type="Antibodypedia" id="41966">
    <property type="antibodies" value="112 antibodies from 25 providers"/>
</dbReference>
<dbReference type="DNASU" id="27239"/>
<dbReference type="Ensembl" id="ENST00000311268.8">
    <molecule id="Q16538-1"/>
    <property type="protein sequence ID" value="ENSP00000311528.3"/>
    <property type="gene ID" value="ENSG00000250510.8"/>
</dbReference>
<dbReference type="Ensembl" id="ENST00000428545.6">
    <molecule id="Q16538-2"/>
    <property type="protein sequence ID" value="ENSP00000399670.2"/>
    <property type="gene ID" value="ENSG00000250510.8"/>
</dbReference>
<dbReference type="GeneID" id="27239"/>
<dbReference type="KEGG" id="hsa:27239"/>
<dbReference type="MANE-Select" id="ENST00000311268.8">
    <property type="protein sequence ID" value="ENSP00000311528.3"/>
    <property type="RefSeq nucleotide sequence ID" value="NM_019858.2"/>
    <property type="RefSeq protein sequence ID" value="NP_062832.1"/>
</dbReference>
<dbReference type="UCSC" id="uc001qqw.2">
    <molecule id="Q16538-1"/>
    <property type="organism name" value="human"/>
</dbReference>
<dbReference type="AGR" id="HGNC:16693"/>
<dbReference type="CTD" id="27239"/>
<dbReference type="DisGeNET" id="27239"/>
<dbReference type="GeneCards" id="GPR162"/>
<dbReference type="HGNC" id="HGNC:16693">
    <property type="gene designation" value="GPR162"/>
</dbReference>
<dbReference type="HPA" id="ENSG00000250510">
    <property type="expression patterns" value="Tissue enhanced (brain, choroid plexus)"/>
</dbReference>
<dbReference type="neXtProt" id="NX_Q16538"/>
<dbReference type="OpenTargets" id="ENSG00000250510"/>
<dbReference type="PharmGKB" id="PA142671713"/>
<dbReference type="VEuPathDB" id="HostDB:ENSG00000250510"/>
<dbReference type="eggNOG" id="ENOG502QVAA">
    <property type="taxonomic scope" value="Eukaryota"/>
</dbReference>
<dbReference type="GeneTree" id="ENSGT00390000017213"/>
<dbReference type="HOGENOM" id="CLU_031636_2_0_1"/>
<dbReference type="InParanoid" id="Q16538"/>
<dbReference type="OMA" id="PQLHDYQ"/>
<dbReference type="OrthoDB" id="9887972at2759"/>
<dbReference type="PAN-GO" id="Q16538">
    <property type="GO annotations" value="0 GO annotations based on evolutionary models"/>
</dbReference>
<dbReference type="PhylomeDB" id="Q16538"/>
<dbReference type="TreeFam" id="TF330832"/>
<dbReference type="PathwayCommons" id="Q16538"/>
<dbReference type="SignaLink" id="Q16538"/>
<dbReference type="BioGRID-ORCS" id="27239">
    <property type="hits" value="17 hits in 1142 CRISPR screens"/>
</dbReference>
<dbReference type="ChiTaRS" id="GPR162">
    <property type="organism name" value="human"/>
</dbReference>
<dbReference type="GeneWiki" id="GPR162"/>
<dbReference type="GenomeRNAi" id="27239"/>
<dbReference type="Pharos" id="Q16538">
    <property type="development level" value="Tbio"/>
</dbReference>
<dbReference type="PRO" id="PR:Q16538"/>
<dbReference type="Proteomes" id="UP000005640">
    <property type="component" value="Chromosome 12"/>
</dbReference>
<dbReference type="RNAct" id="Q16538">
    <property type="molecule type" value="protein"/>
</dbReference>
<dbReference type="Bgee" id="ENSG00000250510">
    <property type="expression patterns" value="Expressed in right hemisphere of cerebellum and 122 other cell types or tissues"/>
</dbReference>
<dbReference type="ExpressionAtlas" id="Q16538">
    <property type="expression patterns" value="baseline and differential"/>
</dbReference>
<dbReference type="GO" id="GO:0005886">
    <property type="term" value="C:plasma membrane"/>
    <property type="evidence" value="ECO:0007669"/>
    <property type="project" value="UniProtKB-SubCell"/>
</dbReference>
<dbReference type="GO" id="GO:0004930">
    <property type="term" value="F:G protein-coupled receptor activity"/>
    <property type="evidence" value="ECO:0007669"/>
    <property type="project" value="UniProtKB-KW"/>
</dbReference>
<dbReference type="CDD" id="cd14998">
    <property type="entry name" value="7tmA_GPR153_GPR162-like"/>
    <property type="match status" value="1"/>
</dbReference>
<dbReference type="Gene3D" id="1.20.1070.10">
    <property type="entry name" value="Rhodopsin 7-helix transmembrane proteins"/>
    <property type="match status" value="1"/>
</dbReference>
<dbReference type="InterPro" id="IPR022347">
    <property type="entry name" value="GCR_153/162"/>
</dbReference>
<dbReference type="InterPro" id="IPR000276">
    <property type="entry name" value="GPCR_Rhodpsn"/>
</dbReference>
<dbReference type="InterPro" id="IPR017452">
    <property type="entry name" value="GPCR_Rhodpsn_7TM"/>
</dbReference>
<dbReference type="InterPro" id="IPR022348">
    <property type="entry name" value="GPR162"/>
</dbReference>
<dbReference type="PANTHER" id="PTHR16518">
    <property type="entry name" value="G-PROTEIN COUPLED RECEPTOR 153, 162"/>
    <property type="match status" value="1"/>
</dbReference>
<dbReference type="PANTHER" id="PTHR16518:SF6">
    <property type="entry name" value="G-PROTEIN COUPLED RECEPTOR 162-RELATED"/>
    <property type="match status" value="1"/>
</dbReference>
<dbReference type="Pfam" id="PF00001">
    <property type="entry name" value="7tm_1"/>
    <property type="match status" value="1"/>
</dbReference>
<dbReference type="PRINTS" id="PR01991">
    <property type="entry name" value="GPR153GPR162"/>
</dbReference>
<dbReference type="PRINTS" id="PR01993">
    <property type="entry name" value="GPR162"/>
</dbReference>
<dbReference type="SUPFAM" id="SSF81321">
    <property type="entry name" value="Family A G protein-coupled receptor-like"/>
    <property type="match status" value="1"/>
</dbReference>
<dbReference type="PROSITE" id="PS50262">
    <property type="entry name" value="G_PROTEIN_RECEP_F1_2"/>
    <property type="match status" value="1"/>
</dbReference>
<protein>
    <recommendedName>
        <fullName>Probable G-protein coupled receptor 162</fullName>
    </recommendedName>
    <alternativeName>
        <fullName>Gene-rich cluster gene A protein</fullName>
    </alternativeName>
</protein>
<keyword id="KW-0025">Alternative splicing</keyword>
<keyword id="KW-1003">Cell membrane</keyword>
<keyword id="KW-0297">G-protein coupled receptor</keyword>
<keyword id="KW-0325">Glycoprotein</keyword>
<keyword id="KW-0472">Membrane</keyword>
<keyword id="KW-0597">Phosphoprotein</keyword>
<keyword id="KW-1267">Proteomics identification</keyword>
<keyword id="KW-0675">Receptor</keyword>
<keyword id="KW-1185">Reference proteome</keyword>
<keyword id="KW-0807">Transducer</keyword>
<keyword id="KW-0812">Transmembrane</keyword>
<keyword id="KW-1133">Transmembrane helix</keyword>
<reference key="1">
    <citation type="journal article" date="1996" name="Genome Res.">
        <title>A gene-rich cluster between the CD4 and triosephosphate isomerase genes at human chromosome 12p13.</title>
        <authorList>
            <person name="Ansari-Lari M.A."/>
            <person name="Muzny D.M."/>
            <person name="Lu J."/>
            <person name="Lu F."/>
            <person name="Lilley C.E."/>
            <person name="Spanos S."/>
            <person name="Malley T."/>
            <person name="Gibbs R.A."/>
        </authorList>
    </citation>
    <scope>NUCLEOTIDE SEQUENCE [GENOMIC DNA / MRNA] (ISOFORMS 1 AND 2)</scope>
</reference>
<reference key="2">
    <citation type="journal article" date="1997" name="Genome Res.">
        <title>Large-scale sequencing in human chromosome 12p13: experimental and computational gene structure determination.</title>
        <authorList>
            <person name="Ansari-Lari M.A."/>
            <person name="Shen Y."/>
            <person name="Muzny D.M."/>
            <person name="Lee W."/>
            <person name="Gibbs R.A."/>
        </authorList>
    </citation>
    <scope>NUCLEOTIDE SEQUENCE [GENOMIC DNA]</scope>
</reference>
<reference key="3">
    <citation type="journal article" date="2004" name="Genome Res.">
        <title>The status, quality, and expansion of the NIH full-length cDNA project: the Mammalian Gene Collection (MGC).</title>
        <authorList>
            <consortium name="The MGC Project Team"/>
        </authorList>
    </citation>
    <scope>NUCLEOTIDE SEQUENCE [LARGE SCALE MRNA] (ISOFORM 2)</scope>
    <scope>VARIANT GLY-459</scope>
    <source>
        <tissue>Brain</tissue>
        <tissue>Lung</tissue>
    </source>
</reference>
<reference key="4">
    <citation type="submission" date="2005-03" db="EMBL/GenBank/DDBJ databases">
        <authorList>
            <person name="Totoki Y."/>
            <person name="Toyoda A."/>
            <person name="Takeda T."/>
            <person name="Sakaki Y."/>
            <person name="Tanaka A."/>
            <person name="Yokoyama S."/>
            <person name="Ohara O."/>
            <person name="Nagase T."/>
            <person name="Kikuno R.F."/>
        </authorList>
    </citation>
    <scope>NUCLEOTIDE SEQUENCE [LARGE SCALE MRNA] OF 21-588 (ISOFORM 1)</scope>
    <source>
        <tissue>Brain</tissue>
    </source>
</reference>
<evidence type="ECO:0000250" key="1"/>
<evidence type="ECO:0000250" key="2">
    <source>
        <dbReference type="UniProtKB" id="Q3UN16"/>
    </source>
</evidence>
<evidence type="ECO:0000255" key="3"/>
<evidence type="ECO:0000255" key="4">
    <source>
        <dbReference type="PROSITE-ProRule" id="PRU00521"/>
    </source>
</evidence>
<evidence type="ECO:0000256" key="5">
    <source>
        <dbReference type="SAM" id="MobiDB-lite"/>
    </source>
</evidence>
<evidence type="ECO:0000269" key="6">
    <source>
    </source>
</evidence>
<evidence type="ECO:0000303" key="7">
    <source>
    </source>
</evidence>
<evidence type="ECO:0000303" key="8">
    <source>
    </source>
</evidence>
<accession>Q16538</accession>
<accession>Q16664</accession>
<accession>Q59EH5</accession>
<accession>Q66K56</accession>
<feature type="chain" id="PRO_0000069647" description="Probable G-protein coupled receptor 162">
    <location>
        <begin position="1"/>
        <end position="588"/>
    </location>
</feature>
<feature type="topological domain" description="Extracellular" evidence="3">
    <location>
        <begin position="1"/>
        <end position="17"/>
    </location>
</feature>
<feature type="transmembrane region" description="Helical; Name=1" evidence="3">
    <location>
        <begin position="18"/>
        <end position="38"/>
    </location>
</feature>
<feature type="topological domain" description="Cytoplasmic" evidence="3">
    <location>
        <begin position="39"/>
        <end position="49"/>
    </location>
</feature>
<feature type="transmembrane region" description="Helical; Name=2" evidence="3">
    <location>
        <begin position="50"/>
        <end position="70"/>
    </location>
</feature>
<feature type="topological domain" description="Extracellular" evidence="3">
    <location>
        <begin position="71"/>
        <end position="91"/>
    </location>
</feature>
<feature type="transmembrane region" description="Helical; Name=3" evidence="3">
    <location>
        <begin position="92"/>
        <end position="112"/>
    </location>
</feature>
<feature type="topological domain" description="Cytoplasmic" evidence="3">
    <location>
        <begin position="113"/>
        <end position="133"/>
    </location>
</feature>
<feature type="transmembrane region" description="Helical; Name=4" evidence="3">
    <location>
        <begin position="134"/>
        <end position="154"/>
    </location>
</feature>
<feature type="topological domain" description="Extracellular" evidence="3">
    <location>
        <begin position="155"/>
        <end position="174"/>
    </location>
</feature>
<feature type="transmembrane region" description="Helical; Name=5" evidence="3">
    <location>
        <begin position="175"/>
        <end position="195"/>
    </location>
</feature>
<feature type="topological domain" description="Cytoplasmic" evidence="3">
    <location>
        <begin position="196"/>
        <end position="275"/>
    </location>
</feature>
<feature type="transmembrane region" description="Helical; Name=6" evidence="3">
    <location>
        <begin position="276"/>
        <end position="296"/>
    </location>
</feature>
<feature type="topological domain" description="Extracellular" evidence="3">
    <location>
        <begin position="297"/>
        <end position="303"/>
    </location>
</feature>
<feature type="transmembrane region" description="Helical; Name=7" evidence="3">
    <location>
        <begin position="304"/>
        <end position="324"/>
    </location>
</feature>
<feature type="topological domain" description="Cytoplasmic" evidence="3">
    <location>
        <begin position="325"/>
        <end position="588"/>
    </location>
</feature>
<feature type="region of interest" description="Disordered" evidence="5">
    <location>
        <begin position="445"/>
        <end position="474"/>
    </location>
</feature>
<feature type="region of interest" description="Disordered" evidence="5">
    <location>
        <begin position="511"/>
        <end position="550"/>
    </location>
</feature>
<feature type="compositionally biased region" description="Low complexity" evidence="5">
    <location>
        <begin position="530"/>
        <end position="546"/>
    </location>
</feature>
<feature type="modified residue" description="Phosphoserine" evidence="2">
    <location>
        <position position="413"/>
    </location>
</feature>
<feature type="modified residue" description="Phosphoserine" evidence="2">
    <location>
        <position position="435"/>
    </location>
</feature>
<feature type="glycosylation site" description="N-linked (GlcNAc...) asparagine" evidence="3">
    <location>
        <position position="86"/>
    </location>
</feature>
<feature type="splice variant" id="VSP_016302" description="In isoform 2." evidence="7 8">
    <location>
        <begin position="1"/>
        <end position="284"/>
    </location>
</feature>
<feature type="splice variant" id="VSP_016303" description="In isoform 2." evidence="7 8">
    <original>GVPIL</original>
    <variation>MLSTG</variation>
    <location>
        <begin position="285"/>
        <end position="289"/>
    </location>
</feature>
<feature type="sequence variant" id="VAR_049407" description="In dbSNP:rs11612427." evidence="6">
    <original>R</original>
    <variation>G</variation>
    <location>
        <position position="459"/>
    </location>
</feature>
<organism>
    <name type="scientific">Homo sapiens</name>
    <name type="common">Human</name>
    <dbReference type="NCBI Taxonomy" id="9606"/>
    <lineage>
        <taxon>Eukaryota</taxon>
        <taxon>Metazoa</taxon>
        <taxon>Chordata</taxon>
        <taxon>Craniata</taxon>
        <taxon>Vertebrata</taxon>
        <taxon>Euteleostomi</taxon>
        <taxon>Mammalia</taxon>
        <taxon>Eutheria</taxon>
        <taxon>Euarchontoglires</taxon>
        <taxon>Primates</taxon>
        <taxon>Haplorrhini</taxon>
        <taxon>Catarrhini</taxon>
        <taxon>Hominidae</taxon>
        <taxon>Homo</taxon>
    </lineage>
</organism>